<proteinExistence type="inferred from homology"/>
<feature type="chain" id="PRO_0000098066" description="Urease subunit gamma">
    <location>
        <begin position="1"/>
        <end position="100"/>
    </location>
</feature>
<reference key="1">
    <citation type="journal article" date="2001" name="Infect. Immun.">
        <title>Silencing and reactivation of urease in Yersinia pestis is determined by one G residue at a specific position in the ureD gene.</title>
        <authorList>
            <person name="Sebbane F."/>
            <person name="Devalckenaere A."/>
            <person name="Foulon J."/>
            <person name="Carniel E."/>
            <person name="Simonet M."/>
        </authorList>
    </citation>
    <scope>NUCLEOTIDE SEQUENCE [GENOMIC DNA]</scope>
    <scope>LACK OF ROLE IN VIRULENCE</scope>
    <source>
        <strain>6/69M</strain>
    </source>
</reference>
<reference key="2">
    <citation type="journal article" date="2001" name="Nature">
        <title>Genome sequence of Yersinia pestis, the causative agent of plague.</title>
        <authorList>
            <person name="Parkhill J."/>
            <person name="Wren B.W."/>
            <person name="Thomson N.R."/>
            <person name="Titball R.W."/>
            <person name="Holden M.T.G."/>
            <person name="Prentice M.B."/>
            <person name="Sebaihia M."/>
            <person name="James K.D."/>
            <person name="Churcher C.M."/>
            <person name="Mungall K.L."/>
            <person name="Baker S."/>
            <person name="Basham D."/>
            <person name="Bentley S.D."/>
            <person name="Brooks K."/>
            <person name="Cerdeno-Tarraga A.-M."/>
            <person name="Chillingworth T."/>
            <person name="Cronin A."/>
            <person name="Davies R.M."/>
            <person name="Davis P."/>
            <person name="Dougan G."/>
            <person name="Feltwell T."/>
            <person name="Hamlin N."/>
            <person name="Holroyd S."/>
            <person name="Jagels K."/>
            <person name="Karlyshev A.V."/>
            <person name="Leather S."/>
            <person name="Moule S."/>
            <person name="Oyston P.C.F."/>
            <person name="Quail M.A."/>
            <person name="Rutherford K.M."/>
            <person name="Simmonds M."/>
            <person name="Skelton J."/>
            <person name="Stevens K."/>
            <person name="Whitehead S."/>
            <person name="Barrell B.G."/>
        </authorList>
    </citation>
    <scope>NUCLEOTIDE SEQUENCE [LARGE SCALE GENOMIC DNA]</scope>
    <source>
        <strain>CO-92 / Biovar Orientalis</strain>
    </source>
</reference>
<reference key="3">
    <citation type="journal article" date="2002" name="J. Bacteriol.">
        <title>Genome sequence of Yersinia pestis KIM.</title>
        <authorList>
            <person name="Deng W."/>
            <person name="Burland V."/>
            <person name="Plunkett G. III"/>
            <person name="Boutin A."/>
            <person name="Mayhew G.F."/>
            <person name="Liss P."/>
            <person name="Perna N.T."/>
            <person name="Rose D.J."/>
            <person name="Mau B."/>
            <person name="Zhou S."/>
            <person name="Schwartz D.C."/>
            <person name="Fetherston J.D."/>
            <person name="Lindler L.E."/>
            <person name="Brubaker R.R."/>
            <person name="Plano G.V."/>
            <person name="Straley S.C."/>
            <person name="McDonough K.A."/>
            <person name="Nilles M.L."/>
            <person name="Matson J.S."/>
            <person name="Blattner F.R."/>
            <person name="Perry R.D."/>
        </authorList>
    </citation>
    <scope>NUCLEOTIDE SEQUENCE [LARGE SCALE GENOMIC DNA]</scope>
    <source>
        <strain>KIM10+ / Biovar Mediaevalis</strain>
    </source>
</reference>
<reference key="4">
    <citation type="journal article" date="2004" name="DNA Res.">
        <title>Complete genome sequence of Yersinia pestis strain 91001, an isolate avirulent to humans.</title>
        <authorList>
            <person name="Song Y."/>
            <person name="Tong Z."/>
            <person name="Wang J."/>
            <person name="Wang L."/>
            <person name="Guo Z."/>
            <person name="Han Y."/>
            <person name="Zhang J."/>
            <person name="Pei D."/>
            <person name="Zhou D."/>
            <person name="Qin H."/>
            <person name="Pang X."/>
            <person name="Han Y."/>
            <person name="Zhai J."/>
            <person name="Li M."/>
            <person name="Cui B."/>
            <person name="Qi Z."/>
            <person name="Jin L."/>
            <person name="Dai R."/>
            <person name="Chen F."/>
            <person name="Li S."/>
            <person name="Ye C."/>
            <person name="Du Z."/>
            <person name="Lin W."/>
            <person name="Wang J."/>
            <person name="Yu J."/>
            <person name="Yang H."/>
            <person name="Wang J."/>
            <person name="Huang P."/>
            <person name="Yang R."/>
        </authorList>
    </citation>
    <scope>NUCLEOTIDE SEQUENCE [LARGE SCALE GENOMIC DNA]</scope>
    <source>
        <strain>91001 / Biovar Mediaevalis</strain>
    </source>
</reference>
<keyword id="KW-0963">Cytoplasm</keyword>
<keyword id="KW-0378">Hydrolase</keyword>
<keyword id="KW-1185">Reference proteome</keyword>
<sequence>MQLTPREVEKLMIYTLSDVAFKRKARGLKLNYPEAVSIITVTAMEGARDGKSVEDVMKEASKVLTKDDVMDGVADLIPNVQVEAIFTDGSRLVTVHDPIK</sequence>
<dbReference type="EC" id="3.5.1.5" evidence="1"/>
<dbReference type="EMBL" id="AF095636">
    <property type="protein sequence ID" value="AAC78632.1"/>
    <property type="molecule type" value="Genomic_DNA"/>
</dbReference>
<dbReference type="EMBL" id="AL590842">
    <property type="protein sequence ID" value="CAL21284.1"/>
    <property type="molecule type" value="Genomic_DNA"/>
</dbReference>
<dbReference type="EMBL" id="AE009952">
    <property type="protein sequence ID" value="AAM84812.1"/>
    <property type="molecule type" value="Genomic_DNA"/>
</dbReference>
<dbReference type="EMBL" id="AE017042">
    <property type="protein sequence ID" value="AAS62666.1"/>
    <property type="molecule type" value="Genomic_DNA"/>
</dbReference>
<dbReference type="PIR" id="AI0324">
    <property type="entry name" value="AI0324"/>
</dbReference>
<dbReference type="RefSeq" id="WP_002215288.1">
    <property type="nucleotide sequence ID" value="NZ_WUCM01000006.1"/>
</dbReference>
<dbReference type="RefSeq" id="YP_002347614.1">
    <property type="nucleotide sequence ID" value="NC_003143.1"/>
</dbReference>
<dbReference type="SMR" id="P69994"/>
<dbReference type="STRING" id="214092.YPO2665"/>
<dbReference type="PaxDb" id="214092-YPO2665"/>
<dbReference type="EnsemblBacteria" id="AAS62666">
    <property type="protein sequence ID" value="AAS62666"/>
    <property type="gene ID" value="YP_2466"/>
</dbReference>
<dbReference type="KEGG" id="ype:YPO2665"/>
<dbReference type="KEGG" id="ypk:y1237"/>
<dbReference type="KEGG" id="ypm:YP_2466"/>
<dbReference type="PATRIC" id="fig|214092.21.peg.3099"/>
<dbReference type="eggNOG" id="COG0831">
    <property type="taxonomic scope" value="Bacteria"/>
</dbReference>
<dbReference type="HOGENOM" id="CLU_145825_1_0_6"/>
<dbReference type="OMA" id="MQLTPHE"/>
<dbReference type="OrthoDB" id="9797217at2"/>
<dbReference type="UniPathway" id="UPA00258">
    <property type="reaction ID" value="UER00370"/>
</dbReference>
<dbReference type="Proteomes" id="UP000000815">
    <property type="component" value="Chromosome"/>
</dbReference>
<dbReference type="Proteomes" id="UP000001019">
    <property type="component" value="Chromosome"/>
</dbReference>
<dbReference type="Proteomes" id="UP000002490">
    <property type="component" value="Chromosome"/>
</dbReference>
<dbReference type="GO" id="GO:0005737">
    <property type="term" value="C:cytoplasm"/>
    <property type="evidence" value="ECO:0007669"/>
    <property type="project" value="UniProtKB-SubCell"/>
</dbReference>
<dbReference type="GO" id="GO:0016151">
    <property type="term" value="F:nickel cation binding"/>
    <property type="evidence" value="ECO:0007669"/>
    <property type="project" value="InterPro"/>
</dbReference>
<dbReference type="GO" id="GO:0009039">
    <property type="term" value="F:urease activity"/>
    <property type="evidence" value="ECO:0007669"/>
    <property type="project" value="UniProtKB-UniRule"/>
</dbReference>
<dbReference type="GO" id="GO:0043419">
    <property type="term" value="P:urea catabolic process"/>
    <property type="evidence" value="ECO:0007669"/>
    <property type="project" value="UniProtKB-UniRule"/>
</dbReference>
<dbReference type="CDD" id="cd00390">
    <property type="entry name" value="Urease_gamma"/>
    <property type="match status" value="1"/>
</dbReference>
<dbReference type="Gene3D" id="3.30.280.10">
    <property type="entry name" value="Urease, gamma-like subunit"/>
    <property type="match status" value="1"/>
</dbReference>
<dbReference type="HAMAP" id="MF_00739">
    <property type="entry name" value="Urease_gamma"/>
    <property type="match status" value="1"/>
</dbReference>
<dbReference type="InterPro" id="IPR012010">
    <property type="entry name" value="Urease_gamma"/>
</dbReference>
<dbReference type="InterPro" id="IPR002026">
    <property type="entry name" value="Urease_gamma/gamma-beta_su"/>
</dbReference>
<dbReference type="InterPro" id="IPR036463">
    <property type="entry name" value="Urease_gamma_sf"/>
</dbReference>
<dbReference type="InterPro" id="IPR050069">
    <property type="entry name" value="Urease_subunit"/>
</dbReference>
<dbReference type="NCBIfam" id="NF009712">
    <property type="entry name" value="PRK13241.1"/>
    <property type="match status" value="1"/>
</dbReference>
<dbReference type="NCBIfam" id="TIGR00193">
    <property type="entry name" value="urease_gam"/>
    <property type="match status" value="1"/>
</dbReference>
<dbReference type="PANTHER" id="PTHR33569">
    <property type="entry name" value="UREASE"/>
    <property type="match status" value="1"/>
</dbReference>
<dbReference type="PANTHER" id="PTHR33569:SF1">
    <property type="entry name" value="UREASE"/>
    <property type="match status" value="1"/>
</dbReference>
<dbReference type="Pfam" id="PF00547">
    <property type="entry name" value="Urease_gamma"/>
    <property type="match status" value="1"/>
</dbReference>
<dbReference type="PIRSF" id="PIRSF001223">
    <property type="entry name" value="Urease_gamma"/>
    <property type="match status" value="1"/>
</dbReference>
<dbReference type="SUPFAM" id="SSF54111">
    <property type="entry name" value="Urease, gamma-subunit"/>
    <property type="match status" value="1"/>
</dbReference>
<evidence type="ECO:0000255" key="1">
    <source>
        <dbReference type="HAMAP-Rule" id="MF_00739"/>
    </source>
</evidence>
<evidence type="ECO:0000305" key="2">
    <source>
    </source>
</evidence>
<protein>
    <recommendedName>
        <fullName evidence="1">Urease subunit gamma</fullName>
        <ecNumber evidence="1">3.5.1.5</ecNumber>
    </recommendedName>
    <alternativeName>
        <fullName evidence="1">Urea amidohydrolase subunit gamma</fullName>
    </alternativeName>
</protein>
<organism>
    <name type="scientific">Yersinia pestis</name>
    <dbReference type="NCBI Taxonomy" id="632"/>
    <lineage>
        <taxon>Bacteria</taxon>
        <taxon>Pseudomonadati</taxon>
        <taxon>Pseudomonadota</taxon>
        <taxon>Gammaproteobacteria</taxon>
        <taxon>Enterobacterales</taxon>
        <taxon>Yersiniaceae</taxon>
        <taxon>Yersinia</taxon>
    </lineage>
</organism>
<comment type="catalytic activity">
    <reaction evidence="1">
        <text>urea + 2 H2O + H(+) = hydrogencarbonate + 2 NH4(+)</text>
        <dbReference type="Rhea" id="RHEA:20557"/>
        <dbReference type="ChEBI" id="CHEBI:15377"/>
        <dbReference type="ChEBI" id="CHEBI:15378"/>
        <dbReference type="ChEBI" id="CHEBI:16199"/>
        <dbReference type="ChEBI" id="CHEBI:17544"/>
        <dbReference type="ChEBI" id="CHEBI:28938"/>
        <dbReference type="EC" id="3.5.1.5"/>
    </reaction>
</comment>
<comment type="pathway">
    <text evidence="1">Nitrogen metabolism; urea degradation; CO(2) and NH(3) from urea (urease route): step 1/1.</text>
</comment>
<comment type="subunit">
    <text evidence="1">Heterotrimer of UreA (gamma), UreB (beta) and UreC (alpha) subunits. Three heterotrimers associate to form the active enzyme.</text>
</comment>
<comment type="subcellular location">
    <subcellularLocation>
        <location evidence="1">Cytoplasm</location>
    </subcellularLocation>
</comment>
<comment type="similarity">
    <text evidence="1">Belongs to the urease gamma subunit family.</text>
</comment>
<comment type="caution">
    <text evidence="2">The last gene of this probable operon, ureD, gives rise to a truncated protein. Absence of ureD prevents expression of active urease. Correction of the mutation does not effect virulence in mice in any detectable fashion, suggesting urease is not important in the virulence of Y.pestis (PubMed:11119503).</text>
</comment>
<name>URE3_YERPE</name>
<gene>
    <name evidence="1" type="primary">ureA</name>
    <name type="synonym">yeuA</name>
    <name type="ordered locus">YPO2665</name>
    <name type="ordered locus">y1237</name>
    <name type="ordered locus">YP_2466</name>
</gene>
<accession>P69994</accession>
<accession>P52315</accession>
<accession>Q0WDM4</accession>
<accession>Q667P8</accession>
<accession>Q9ZFS0</accession>